<organism>
    <name type="scientific">Arabidopsis thaliana</name>
    <name type="common">Mouse-ear cress</name>
    <dbReference type="NCBI Taxonomy" id="3702"/>
    <lineage>
        <taxon>Eukaryota</taxon>
        <taxon>Viridiplantae</taxon>
        <taxon>Streptophyta</taxon>
        <taxon>Embryophyta</taxon>
        <taxon>Tracheophyta</taxon>
        <taxon>Spermatophyta</taxon>
        <taxon>Magnoliopsida</taxon>
        <taxon>eudicotyledons</taxon>
        <taxon>Gunneridae</taxon>
        <taxon>Pentapetalae</taxon>
        <taxon>rosids</taxon>
        <taxon>malvids</taxon>
        <taxon>Brassicales</taxon>
        <taxon>Brassicaceae</taxon>
        <taxon>Camelineae</taxon>
        <taxon>Arabidopsis</taxon>
    </lineage>
</organism>
<protein>
    <recommendedName>
        <fullName>WEB family protein At3g02930, chloroplastic</fullName>
    </recommendedName>
</protein>
<comment type="subcellular location">
    <subcellularLocation>
        <location evidence="3">Plastid</location>
        <location evidence="3">Chloroplast</location>
    </subcellularLocation>
</comment>
<comment type="alternative products">
    <event type="alternative splicing"/>
    <isoform>
        <id>Q9M8T5-1</id>
        <name>1</name>
        <sequence type="displayed"/>
    </isoform>
    <text>A number of isoforms are produced. According to EST sequences.</text>
</comment>
<comment type="similarity">
    <text evidence="3">Belongs to the WEB family.</text>
</comment>
<reference key="1">
    <citation type="journal article" date="2000" name="Nature">
        <title>Sequence and analysis of chromosome 3 of the plant Arabidopsis thaliana.</title>
        <authorList>
            <person name="Salanoubat M."/>
            <person name="Lemcke K."/>
            <person name="Rieger M."/>
            <person name="Ansorge W."/>
            <person name="Unseld M."/>
            <person name="Fartmann B."/>
            <person name="Valle G."/>
            <person name="Bloecker H."/>
            <person name="Perez-Alonso M."/>
            <person name="Obermaier B."/>
            <person name="Delseny M."/>
            <person name="Boutry M."/>
            <person name="Grivell L.A."/>
            <person name="Mache R."/>
            <person name="Puigdomenech P."/>
            <person name="De Simone V."/>
            <person name="Choisne N."/>
            <person name="Artiguenave F."/>
            <person name="Robert C."/>
            <person name="Brottier P."/>
            <person name="Wincker P."/>
            <person name="Cattolico L."/>
            <person name="Weissenbach J."/>
            <person name="Saurin W."/>
            <person name="Quetier F."/>
            <person name="Schaefer M."/>
            <person name="Mueller-Auer S."/>
            <person name="Gabel C."/>
            <person name="Fuchs M."/>
            <person name="Benes V."/>
            <person name="Wurmbach E."/>
            <person name="Drzonek H."/>
            <person name="Erfle H."/>
            <person name="Jordan N."/>
            <person name="Bangert S."/>
            <person name="Wiedelmann R."/>
            <person name="Kranz H."/>
            <person name="Voss H."/>
            <person name="Holland R."/>
            <person name="Brandt P."/>
            <person name="Nyakatura G."/>
            <person name="Vezzi A."/>
            <person name="D'Angelo M."/>
            <person name="Pallavicini A."/>
            <person name="Toppo S."/>
            <person name="Simionati B."/>
            <person name="Conrad A."/>
            <person name="Hornischer K."/>
            <person name="Kauer G."/>
            <person name="Loehnert T.-H."/>
            <person name="Nordsiek G."/>
            <person name="Reichelt J."/>
            <person name="Scharfe M."/>
            <person name="Schoen O."/>
            <person name="Bargues M."/>
            <person name="Terol J."/>
            <person name="Climent J."/>
            <person name="Navarro P."/>
            <person name="Collado C."/>
            <person name="Perez-Perez A."/>
            <person name="Ottenwaelder B."/>
            <person name="Duchemin D."/>
            <person name="Cooke R."/>
            <person name="Laudie M."/>
            <person name="Berger-Llauro C."/>
            <person name="Purnelle B."/>
            <person name="Masuy D."/>
            <person name="de Haan M."/>
            <person name="Maarse A.C."/>
            <person name="Alcaraz J.-P."/>
            <person name="Cottet A."/>
            <person name="Casacuberta E."/>
            <person name="Monfort A."/>
            <person name="Argiriou A."/>
            <person name="Flores M."/>
            <person name="Liguori R."/>
            <person name="Vitale D."/>
            <person name="Mannhaupt G."/>
            <person name="Haase D."/>
            <person name="Schoof H."/>
            <person name="Rudd S."/>
            <person name="Zaccaria P."/>
            <person name="Mewes H.-W."/>
            <person name="Mayer K.F.X."/>
            <person name="Kaul S."/>
            <person name="Town C.D."/>
            <person name="Koo H.L."/>
            <person name="Tallon L.J."/>
            <person name="Jenkins J."/>
            <person name="Rooney T."/>
            <person name="Rizzo M."/>
            <person name="Walts A."/>
            <person name="Utterback T."/>
            <person name="Fujii C.Y."/>
            <person name="Shea T.P."/>
            <person name="Creasy T.H."/>
            <person name="Haas B."/>
            <person name="Maiti R."/>
            <person name="Wu D."/>
            <person name="Peterson J."/>
            <person name="Van Aken S."/>
            <person name="Pai G."/>
            <person name="Militscher J."/>
            <person name="Sellers P."/>
            <person name="Gill J.E."/>
            <person name="Feldblyum T.V."/>
            <person name="Preuss D."/>
            <person name="Lin X."/>
            <person name="Nierman W.C."/>
            <person name="Salzberg S.L."/>
            <person name="White O."/>
            <person name="Venter J.C."/>
            <person name="Fraser C.M."/>
            <person name="Kaneko T."/>
            <person name="Nakamura Y."/>
            <person name="Sato S."/>
            <person name="Kato T."/>
            <person name="Asamizu E."/>
            <person name="Sasamoto S."/>
            <person name="Kimura T."/>
            <person name="Idesawa K."/>
            <person name="Kawashima K."/>
            <person name="Kishida Y."/>
            <person name="Kiyokawa C."/>
            <person name="Kohara M."/>
            <person name="Matsumoto M."/>
            <person name="Matsuno A."/>
            <person name="Muraki A."/>
            <person name="Nakayama S."/>
            <person name="Nakazaki N."/>
            <person name="Shinpo S."/>
            <person name="Takeuchi C."/>
            <person name="Wada T."/>
            <person name="Watanabe A."/>
            <person name="Yamada M."/>
            <person name="Yasuda M."/>
            <person name="Tabata S."/>
        </authorList>
    </citation>
    <scope>NUCLEOTIDE SEQUENCE [LARGE SCALE GENOMIC DNA]</scope>
    <source>
        <strain>cv. Columbia</strain>
    </source>
</reference>
<reference key="2">
    <citation type="journal article" date="2017" name="Plant J.">
        <title>Araport11: a complete reannotation of the Arabidopsis thaliana reference genome.</title>
        <authorList>
            <person name="Cheng C.Y."/>
            <person name="Krishnakumar V."/>
            <person name="Chan A.P."/>
            <person name="Thibaud-Nissen F."/>
            <person name="Schobel S."/>
            <person name="Town C.D."/>
        </authorList>
    </citation>
    <scope>GENOME REANNOTATION</scope>
    <source>
        <strain>cv. Columbia</strain>
    </source>
</reference>
<feature type="transit peptide" description="Chloroplast" evidence="1">
    <location>
        <begin position="1"/>
        <end position="78"/>
    </location>
</feature>
<feature type="chain" id="PRO_0000414074" description="WEB family protein At3g02930, chloroplastic">
    <location>
        <begin position="79"/>
        <end position="806"/>
    </location>
</feature>
<feature type="region of interest" description="Disordered" evidence="2">
    <location>
        <begin position="1"/>
        <end position="94"/>
    </location>
</feature>
<feature type="region of interest" description="Disordered" evidence="2">
    <location>
        <begin position="380"/>
        <end position="403"/>
    </location>
</feature>
<feature type="region of interest" description="Disordered" evidence="2">
    <location>
        <begin position="684"/>
        <end position="725"/>
    </location>
</feature>
<feature type="region of interest" description="Disordered" evidence="2">
    <location>
        <begin position="746"/>
        <end position="777"/>
    </location>
</feature>
<feature type="coiled-coil region" evidence="1">
    <location>
        <begin position="88"/>
        <end position="530"/>
    </location>
</feature>
<feature type="coiled-coil region" evidence="1">
    <location>
        <begin position="585"/>
        <end position="662"/>
    </location>
</feature>
<feature type="coiled-coil region" evidence="1">
    <location>
        <begin position="698"/>
        <end position="757"/>
    </location>
</feature>
<feature type="compositionally biased region" description="Low complexity" evidence="2">
    <location>
        <begin position="9"/>
        <end position="22"/>
    </location>
</feature>
<feature type="compositionally biased region" description="Polar residues" evidence="2">
    <location>
        <begin position="34"/>
        <end position="59"/>
    </location>
</feature>
<feature type="compositionally biased region" description="Basic and acidic residues" evidence="2">
    <location>
        <begin position="391"/>
        <end position="403"/>
    </location>
</feature>
<feature type="compositionally biased region" description="Basic and acidic residues" evidence="2">
    <location>
        <begin position="685"/>
        <end position="699"/>
    </location>
</feature>
<feature type="compositionally biased region" description="Basic and acidic residues" evidence="2">
    <location>
        <begin position="706"/>
        <end position="725"/>
    </location>
</feature>
<feature type="compositionally biased region" description="Polar residues" evidence="2">
    <location>
        <begin position="759"/>
        <end position="769"/>
    </location>
</feature>
<evidence type="ECO:0000255" key="1"/>
<evidence type="ECO:0000256" key="2">
    <source>
        <dbReference type="SAM" id="MobiDB-lite"/>
    </source>
</evidence>
<evidence type="ECO:0000305" key="3"/>
<name>Y3293_ARATH</name>
<keyword id="KW-0025">Alternative splicing</keyword>
<keyword id="KW-0150">Chloroplast</keyword>
<keyword id="KW-0175">Coiled coil</keyword>
<keyword id="KW-0934">Plastid</keyword>
<keyword id="KW-1185">Reference proteome</keyword>
<keyword id="KW-0809">Transit peptide</keyword>
<dbReference type="EMBL" id="AC018363">
    <property type="protein sequence ID" value="AAF26966.1"/>
    <property type="molecule type" value="Genomic_DNA"/>
</dbReference>
<dbReference type="EMBL" id="CP002686">
    <property type="protein sequence ID" value="AEE73881.1"/>
    <property type="molecule type" value="Genomic_DNA"/>
</dbReference>
<dbReference type="EMBL" id="CP002686">
    <property type="protein sequence ID" value="ANM66007.1"/>
    <property type="molecule type" value="Genomic_DNA"/>
</dbReference>
<dbReference type="RefSeq" id="NP_001319456.1">
    <molecule id="Q9M8T5-1"/>
    <property type="nucleotide sequence ID" value="NM_001337447.1"/>
</dbReference>
<dbReference type="RefSeq" id="NP_001327934.1">
    <molecule id="Q9M8T5-1"/>
    <property type="nucleotide sequence ID" value="NM_001337448.1"/>
</dbReference>
<dbReference type="SMR" id="Q9M8T5"/>
<dbReference type="FunCoup" id="Q9M8T5">
    <property type="interactions" value="35"/>
</dbReference>
<dbReference type="STRING" id="3702.Q9M8T5"/>
<dbReference type="GlyGen" id="Q9M8T5">
    <property type="glycosylation" value="1 site"/>
</dbReference>
<dbReference type="iPTMnet" id="Q9M8T5"/>
<dbReference type="PaxDb" id="3702-AT3G02930.1"/>
<dbReference type="ProteomicsDB" id="232371">
    <molecule id="Q9M8T5-1"/>
</dbReference>
<dbReference type="EnsemblPlants" id="AT3G02930.1">
    <molecule id="Q9M8T5-1"/>
    <property type="protein sequence ID" value="AT3G02930.1"/>
    <property type="gene ID" value="AT3G02930"/>
</dbReference>
<dbReference type="EnsemblPlants" id="AT3G02930.3">
    <molecule id="Q9M8T5-1"/>
    <property type="protein sequence ID" value="AT3G02930.3"/>
    <property type="gene ID" value="AT3G02930"/>
</dbReference>
<dbReference type="GeneID" id="821180"/>
<dbReference type="Gramene" id="AT3G02930.1">
    <molecule id="Q9M8T5-1"/>
    <property type="protein sequence ID" value="AT3G02930.1"/>
    <property type="gene ID" value="AT3G02930"/>
</dbReference>
<dbReference type="Gramene" id="AT3G02930.3">
    <molecule id="Q9M8T5-1"/>
    <property type="protein sequence ID" value="AT3G02930.3"/>
    <property type="gene ID" value="AT3G02930"/>
</dbReference>
<dbReference type="KEGG" id="ath:AT3G02930"/>
<dbReference type="Araport" id="AT3G02930"/>
<dbReference type="TAIR" id="AT3G02930"/>
<dbReference type="eggNOG" id="ENOG502QSCE">
    <property type="taxonomic scope" value="Eukaryota"/>
</dbReference>
<dbReference type="HOGENOM" id="CLU_013878_1_0_1"/>
<dbReference type="InParanoid" id="Q9M8T5"/>
<dbReference type="OMA" id="VEWEQRE"/>
<dbReference type="PhylomeDB" id="Q9M8T5"/>
<dbReference type="PRO" id="PR:Q9M8T5"/>
<dbReference type="Proteomes" id="UP000006548">
    <property type="component" value="Chromosome 3"/>
</dbReference>
<dbReference type="ExpressionAtlas" id="Q9M8T5">
    <property type="expression patterns" value="baseline and differential"/>
</dbReference>
<dbReference type="GO" id="GO:0009507">
    <property type="term" value="C:chloroplast"/>
    <property type="evidence" value="ECO:0007669"/>
    <property type="project" value="UniProtKB-SubCell"/>
</dbReference>
<dbReference type="GO" id="GO:0005783">
    <property type="term" value="C:endoplasmic reticulum"/>
    <property type="evidence" value="ECO:0007005"/>
    <property type="project" value="TAIR"/>
</dbReference>
<dbReference type="GO" id="GO:0005875">
    <property type="term" value="C:microtubule associated complex"/>
    <property type="evidence" value="ECO:0000314"/>
    <property type="project" value="TAIR"/>
</dbReference>
<dbReference type="PANTHER" id="PTHR23160">
    <property type="entry name" value="SYNAPTONEMAL COMPLEX PROTEIN-RELATED"/>
    <property type="match status" value="1"/>
</dbReference>
<dbReference type="PANTHER" id="PTHR23160:SF16">
    <property type="entry name" value="WEB FAMILY PROTEIN"/>
    <property type="match status" value="1"/>
</dbReference>
<sequence>MASKIKNGLSDTTLRKSSSTSLRVPRLTRIVTKPDSNSPSPTQQQSRLSFERPSSNSKPSTDKRSPKAPTPPEKTQIRAVRVSESQPQSVQIKEDLKKANELIASLENEKAKALDQLKEARKEAEEASEKLDEALEAQKKSLENFEIEKFEVVEAGIEAVQRKEEELKKELENVKNQHASESATLLLVTQELENVNQELANAKDAKSKALCRADDASKMAAIHAEKVEILSSELIRLKALLDSTREKEIISKNEIALKLGAEIVDLKRDLENARSLEAKVKELEMIIEQLNVDLEAAKMAESYAHGFADEWQNKAKELEKRLEEANKLEKCASVSLVSVTKQLEVSNSRLHDMESEITDLKEKIELLEMTVASQKVDLEKSEQKLGIAEEESSKSEKEAEKLKNELETVNEEKTQALKKEQDATSSVQRLLEEKKKILSELESSKEEEEKSKKAMESLASALHEVSSESRELKEKLLSRGDQNYETQIEDLKLVIKATNNKYENMLDEARHEIDVLVNAVEQTKKQFESAMVDWEMREAGLVNHVKEFDEEVSSMGKEMNRLGNLVKRTKEEADASWEKESQMRDCLKEVEDEVIYLQETLREAKAETLKLKGKMLDKETEFQSIVHENDELRVKQDDSLKKIKELSELLEEALAKKHIEENGELSESEKDYDLLPKVVEFSEENGYRSAEEKSSKVETLDGMNMKLEEDTEKKEKKERSPEDETVEVEFKMWESCQIEKKEVFHKESAKEEEEDLNVVDQSQKTSPVNGLTGEDELLKEKEKKKKKTLFGKVGNLLKKKGPVNQK</sequence>
<proteinExistence type="inferred from homology"/>
<gene>
    <name type="ordered locus">At3g02930</name>
    <name type="ORF">F13E7.12</name>
</gene>
<accession>Q9M8T5</accession>